<keyword id="KW-0903">Direct protein sequencing</keyword>
<keyword id="KW-1015">Disulfide bond</keyword>
<keyword id="KW-0325">Glycoprotein</keyword>
<keyword id="KW-0646">Protease inhibitor</keyword>
<keyword id="KW-0677">Repeat</keyword>
<keyword id="KW-0964">Secreted</keyword>
<keyword id="KW-0722">Serine protease inhibitor</keyword>
<sequence length="56" mass="5868">LAAVNVDCSGYPKPACTMESRPICGSDNTTYSNKCNFCNAVVESNGTLTLSYPGVC</sequence>
<organism>
    <name type="scientific">Rollulus rouloul</name>
    <name type="common">Crested partridge</name>
    <dbReference type="NCBI Taxonomy" id="30405"/>
    <lineage>
        <taxon>Eukaryota</taxon>
        <taxon>Metazoa</taxon>
        <taxon>Chordata</taxon>
        <taxon>Craniata</taxon>
        <taxon>Vertebrata</taxon>
        <taxon>Euteleostomi</taxon>
        <taxon>Archelosauria</taxon>
        <taxon>Archosauria</taxon>
        <taxon>Dinosauria</taxon>
        <taxon>Saurischia</taxon>
        <taxon>Theropoda</taxon>
        <taxon>Coelurosauria</taxon>
        <taxon>Aves</taxon>
        <taxon>Neognathae</taxon>
        <taxon>Galloanserae</taxon>
        <taxon>Galliformes</taxon>
        <taxon>Phasianidae</taxon>
        <taxon>Perdicinae</taxon>
        <taxon>Rollulus</taxon>
    </lineage>
</organism>
<dbReference type="PIR" id="C61588">
    <property type="entry name" value="C61588"/>
</dbReference>
<dbReference type="SMR" id="P52252"/>
<dbReference type="GO" id="GO:0005576">
    <property type="term" value="C:extracellular region"/>
    <property type="evidence" value="ECO:0007669"/>
    <property type="project" value="UniProtKB-SubCell"/>
</dbReference>
<dbReference type="GO" id="GO:0004867">
    <property type="term" value="F:serine-type endopeptidase inhibitor activity"/>
    <property type="evidence" value="ECO:0007669"/>
    <property type="project" value="UniProtKB-KW"/>
</dbReference>
<dbReference type="CDD" id="cd00104">
    <property type="entry name" value="KAZAL_FS"/>
    <property type="match status" value="1"/>
</dbReference>
<dbReference type="FunFam" id="3.30.60.30:FF:000037">
    <property type="entry name" value="Ovomucoid"/>
    <property type="match status" value="1"/>
</dbReference>
<dbReference type="Gene3D" id="3.30.60.30">
    <property type="match status" value="1"/>
</dbReference>
<dbReference type="InterPro" id="IPR051597">
    <property type="entry name" value="Bifunctional_prot_inhibitor"/>
</dbReference>
<dbReference type="InterPro" id="IPR002350">
    <property type="entry name" value="Kazal_dom"/>
</dbReference>
<dbReference type="InterPro" id="IPR036058">
    <property type="entry name" value="Kazal_dom_sf"/>
</dbReference>
<dbReference type="InterPro" id="IPR001239">
    <property type="entry name" value="Prot_inh_Kazal-m"/>
</dbReference>
<dbReference type="PANTHER" id="PTHR47729:SF1">
    <property type="entry name" value="OVOMUCOID-LIKE-RELATED"/>
    <property type="match status" value="1"/>
</dbReference>
<dbReference type="PANTHER" id="PTHR47729">
    <property type="entry name" value="SERINE PEPTIDASE INHIBITOR, KAZAL TYPE 2, TANDEM DUPLICATE 1-RELATED"/>
    <property type="match status" value="1"/>
</dbReference>
<dbReference type="Pfam" id="PF00050">
    <property type="entry name" value="Kazal_1"/>
    <property type="match status" value="1"/>
</dbReference>
<dbReference type="PRINTS" id="PR00290">
    <property type="entry name" value="KAZALINHBTR"/>
</dbReference>
<dbReference type="SMART" id="SM00280">
    <property type="entry name" value="KAZAL"/>
    <property type="match status" value="1"/>
</dbReference>
<dbReference type="SUPFAM" id="SSF100895">
    <property type="entry name" value="Kazal-type serine protease inhibitors"/>
    <property type="match status" value="1"/>
</dbReference>
<dbReference type="PROSITE" id="PS00282">
    <property type="entry name" value="KAZAL_1"/>
    <property type="match status" value="1"/>
</dbReference>
<dbReference type="PROSITE" id="PS51465">
    <property type="entry name" value="KAZAL_2"/>
    <property type="match status" value="1"/>
</dbReference>
<name>IOVO_ROLRO</name>
<comment type="subcellular location">
    <subcellularLocation>
        <location>Secreted</location>
    </subcellularLocation>
</comment>
<comment type="domain">
    <text>Avian ovomucoid consists of three homologous, tandem Kazal family inhibitory domains.</text>
</comment>
<feature type="chain" id="PRO_0000073175" description="Ovomucoid">
    <location>
        <begin position="1" status="less than"/>
        <end position="56" status="greater than"/>
    </location>
</feature>
<feature type="domain" description="Kazal-like" evidence="2">
    <location>
        <begin position="6"/>
        <end position="56"/>
    </location>
</feature>
<feature type="site" description="Reactive bond 3">
    <location>
        <begin position="18"/>
        <end position="19"/>
    </location>
</feature>
<feature type="glycosylation site" description="N-linked (GlcNAc...) asparagine" evidence="1">
    <location>
        <position position="45"/>
    </location>
</feature>
<feature type="disulfide bond">
    <location>
        <begin position="8"/>
        <end position="38"/>
    </location>
</feature>
<feature type="disulfide bond">
    <location>
        <begin position="16"/>
        <end position="35"/>
    </location>
</feature>
<feature type="disulfide bond">
    <location>
        <begin position="24"/>
        <end position="56"/>
    </location>
</feature>
<feature type="non-terminal residue">
    <location>
        <position position="1"/>
    </location>
</feature>
<feature type="non-terminal residue">
    <location>
        <position position="56"/>
    </location>
</feature>
<reference key="1">
    <citation type="journal article" date="1993" name="J. Protein Chem.">
        <title>Amino acid sequences of ovomucoid third domains from 27 additional species of birds.</title>
        <authorList>
            <person name="Apostol I."/>
            <person name="Giletto A."/>
            <person name="Komiyama T."/>
            <person name="Zhang W."/>
            <person name="Laskowski M. Jr."/>
        </authorList>
    </citation>
    <scope>PROTEIN SEQUENCE</scope>
</reference>
<accession>P52252</accession>
<evidence type="ECO:0000255" key="1"/>
<evidence type="ECO:0000255" key="2">
    <source>
        <dbReference type="PROSITE-ProRule" id="PRU00798"/>
    </source>
</evidence>
<proteinExistence type="evidence at protein level"/>
<protein>
    <recommendedName>
        <fullName>Ovomucoid</fullName>
    </recommendedName>
</protein>